<protein>
    <recommendedName>
        <fullName evidence="1">Large ribosomal subunit protein bL36</fullName>
    </recommendedName>
    <alternativeName>
        <fullName evidence="2">50S ribosomal protein L36</fullName>
    </alternativeName>
</protein>
<sequence>MKVMASVKRICRNCKIIKRKGVVRVICSSDPRHKQRQG</sequence>
<feature type="chain" id="PRO_1000101012" description="Large ribosomal subunit protein bL36">
    <location>
        <begin position="1"/>
        <end position="38"/>
    </location>
</feature>
<organism>
    <name type="scientific">Paraburkholderia phytofirmans (strain DSM 17436 / LMG 22146 / PsJN)</name>
    <name type="common">Burkholderia phytofirmans</name>
    <dbReference type="NCBI Taxonomy" id="398527"/>
    <lineage>
        <taxon>Bacteria</taxon>
        <taxon>Pseudomonadati</taxon>
        <taxon>Pseudomonadota</taxon>
        <taxon>Betaproteobacteria</taxon>
        <taxon>Burkholderiales</taxon>
        <taxon>Burkholderiaceae</taxon>
        <taxon>Paraburkholderia</taxon>
    </lineage>
</organism>
<gene>
    <name evidence="1" type="primary">rpmJ</name>
    <name type="ordered locus">Bphyt_3622</name>
</gene>
<keyword id="KW-0687">Ribonucleoprotein</keyword>
<keyword id="KW-0689">Ribosomal protein</keyword>
<name>RL36_PARPJ</name>
<evidence type="ECO:0000255" key="1">
    <source>
        <dbReference type="HAMAP-Rule" id="MF_00251"/>
    </source>
</evidence>
<evidence type="ECO:0000305" key="2"/>
<reference key="1">
    <citation type="journal article" date="2011" name="J. Bacteriol.">
        <title>Complete genome sequence of the plant growth-promoting endophyte Burkholderia phytofirmans strain PsJN.</title>
        <authorList>
            <person name="Weilharter A."/>
            <person name="Mitter B."/>
            <person name="Shin M.V."/>
            <person name="Chain P.S."/>
            <person name="Nowak J."/>
            <person name="Sessitsch A."/>
        </authorList>
    </citation>
    <scope>NUCLEOTIDE SEQUENCE [LARGE SCALE GENOMIC DNA]</scope>
    <source>
        <strain>DSM 17436 / LMG 22146 / PsJN</strain>
    </source>
</reference>
<accession>B2T729</accession>
<dbReference type="EMBL" id="CP001052">
    <property type="protein sequence ID" value="ACD18012.1"/>
    <property type="molecule type" value="Genomic_DNA"/>
</dbReference>
<dbReference type="RefSeq" id="WP_004199844.1">
    <property type="nucleotide sequence ID" value="NC_010681.1"/>
</dbReference>
<dbReference type="SMR" id="B2T729"/>
<dbReference type="STRING" id="398527.Bphyt_3622"/>
<dbReference type="GeneID" id="98107138"/>
<dbReference type="KEGG" id="bpy:Bphyt_3622"/>
<dbReference type="eggNOG" id="COG0257">
    <property type="taxonomic scope" value="Bacteria"/>
</dbReference>
<dbReference type="HOGENOM" id="CLU_135723_6_2_4"/>
<dbReference type="OrthoDB" id="9802520at2"/>
<dbReference type="Proteomes" id="UP000001739">
    <property type="component" value="Chromosome 1"/>
</dbReference>
<dbReference type="GO" id="GO:0005737">
    <property type="term" value="C:cytoplasm"/>
    <property type="evidence" value="ECO:0007669"/>
    <property type="project" value="UniProtKB-ARBA"/>
</dbReference>
<dbReference type="GO" id="GO:1990904">
    <property type="term" value="C:ribonucleoprotein complex"/>
    <property type="evidence" value="ECO:0007669"/>
    <property type="project" value="UniProtKB-KW"/>
</dbReference>
<dbReference type="GO" id="GO:0005840">
    <property type="term" value="C:ribosome"/>
    <property type="evidence" value="ECO:0007669"/>
    <property type="project" value="UniProtKB-KW"/>
</dbReference>
<dbReference type="GO" id="GO:0003735">
    <property type="term" value="F:structural constituent of ribosome"/>
    <property type="evidence" value="ECO:0007669"/>
    <property type="project" value="InterPro"/>
</dbReference>
<dbReference type="GO" id="GO:0006412">
    <property type="term" value="P:translation"/>
    <property type="evidence" value="ECO:0007669"/>
    <property type="project" value="UniProtKB-UniRule"/>
</dbReference>
<dbReference type="HAMAP" id="MF_00251">
    <property type="entry name" value="Ribosomal_bL36"/>
    <property type="match status" value="1"/>
</dbReference>
<dbReference type="InterPro" id="IPR000473">
    <property type="entry name" value="Ribosomal_bL36"/>
</dbReference>
<dbReference type="InterPro" id="IPR035977">
    <property type="entry name" value="Ribosomal_bL36_sp"/>
</dbReference>
<dbReference type="NCBIfam" id="TIGR01022">
    <property type="entry name" value="rpmJ_bact"/>
    <property type="match status" value="1"/>
</dbReference>
<dbReference type="PANTHER" id="PTHR42888">
    <property type="entry name" value="50S RIBOSOMAL PROTEIN L36, CHLOROPLASTIC"/>
    <property type="match status" value="1"/>
</dbReference>
<dbReference type="PANTHER" id="PTHR42888:SF1">
    <property type="entry name" value="LARGE RIBOSOMAL SUBUNIT PROTEIN BL36C"/>
    <property type="match status" value="1"/>
</dbReference>
<dbReference type="Pfam" id="PF00444">
    <property type="entry name" value="Ribosomal_L36"/>
    <property type="match status" value="1"/>
</dbReference>
<dbReference type="SUPFAM" id="SSF57840">
    <property type="entry name" value="Ribosomal protein L36"/>
    <property type="match status" value="1"/>
</dbReference>
<dbReference type="PROSITE" id="PS00828">
    <property type="entry name" value="RIBOSOMAL_L36"/>
    <property type="match status" value="1"/>
</dbReference>
<proteinExistence type="inferred from homology"/>
<comment type="similarity">
    <text evidence="1">Belongs to the bacterial ribosomal protein bL36 family.</text>
</comment>